<gene>
    <name type="ordered locus">lwe0039</name>
</gene>
<reference key="1">
    <citation type="journal article" date="2006" name="J. Bacteriol.">
        <title>Whole-genome sequence of Listeria welshimeri reveals common steps in genome reduction with Listeria innocua as compared to Listeria monocytogenes.</title>
        <authorList>
            <person name="Hain T."/>
            <person name="Steinweg C."/>
            <person name="Kuenne C.T."/>
            <person name="Billion A."/>
            <person name="Ghai R."/>
            <person name="Chatterjee S.S."/>
            <person name="Domann E."/>
            <person name="Kaerst U."/>
            <person name="Goesmann A."/>
            <person name="Bekel T."/>
            <person name="Bartels D."/>
            <person name="Kaiser O."/>
            <person name="Meyer F."/>
            <person name="Puehler A."/>
            <person name="Weisshaar B."/>
            <person name="Wehland J."/>
            <person name="Liang C."/>
            <person name="Dandekar T."/>
            <person name="Lampidis R."/>
            <person name="Kreft J."/>
            <person name="Goebel W."/>
            <person name="Chakraborty T."/>
        </authorList>
    </citation>
    <scope>NUCLEOTIDE SEQUENCE [LARGE SCALE GENOMIC DNA]</scope>
    <source>
        <strain>ATCC 35897 / DSM 20650 / CCUG 15529 / CIP 8149 / NCTC 11857 / SLCC 5334 / V8</strain>
    </source>
</reference>
<comment type="function">
    <text evidence="1">May be involved in the proteolytic processing of a quorum sensing system signal molecule precursor.</text>
</comment>
<comment type="subcellular location">
    <subcellularLocation>
        <location evidence="1">Cell membrane</location>
        <topology evidence="1">Multi-pass membrane protein</topology>
    </subcellularLocation>
</comment>
<comment type="similarity">
    <text evidence="1">Belongs to the AgrB family.</text>
</comment>
<protein>
    <recommendedName>
        <fullName evidence="1">Putative AgrB-like protein</fullName>
        <ecNumber evidence="1">3.4.-.-</ecNumber>
    </recommendedName>
</protein>
<dbReference type="EC" id="3.4.-.-" evidence="1"/>
<dbReference type="EMBL" id="AM263198">
    <property type="protein sequence ID" value="CAK19457.1"/>
    <property type="molecule type" value="Genomic_DNA"/>
</dbReference>
<dbReference type="RefSeq" id="WP_011700914.1">
    <property type="nucleotide sequence ID" value="NC_008555.1"/>
</dbReference>
<dbReference type="STRING" id="386043.lwe0039"/>
<dbReference type="GeneID" id="61187922"/>
<dbReference type="KEGG" id="lwe:lwe0039"/>
<dbReference type="eggNOG" id="COG4512">
    <property type="taxonomic scope" value="Bacteria"/>
</dbReference>
<dbReference type="HOGENOM" id="CLU_098969_2_2_9"/>
<dbReference type="OrthoDB" id="2360675at2"/>
<dbReference type="Proteomes" id="UP000000779">
    <property type="component" value="Chromosome"/>
</dbReference>
<dbReference type="GO" id="GO:0005886">
    <property type="term" value="C:plasma membrane"/>
    <property type="evidence" value="ECO:0007669"/>
    <property type="project" value="UniProtKB-SubCell"/>
</dbReference>
<dbReference type="GO" id="GO:0008233">
    <property type="term" value="F:peptidase activity"/>
    <property type="evidence" value="ECO:0007669"/>
    <property type="project" value="UniProtKB-UniRule"/>
</dbReference>
<dbReference type="GO" id="GO:0006508">
    <property type="term" value="P:proteolysis"/>
    <property type="evidence" value="ECO:0007669"/>
    <property type="project" value="UniProtKB-KW"/>
</dbReference>
<dbReference type="GO" id="GO:0009372">
    <property type="term" value="P:quorum sensing"/>
    <property type="evidence" value="ECO:0007669"/>
    <property type="project" value="UniProtKB-UniRule"/>
</dbReference>
<dbReference type="HAMAP" id="MF_00784">
    <property type="entry name" value="AgrB"/>
    <property type="match status" value="1"/>
</dbReference>
<dbReference type="InterPro" id="IPR006741">
    <property type="entry name" value="AgrB"/>
</dbReference>
<dbReference type="NCBIfam" id="NF002210">
    <property type="entry name" value="PRK01100.1"/>
    <property type="match status" value="1"/>
</dbReference>
<dbReference type="Pfam" id="PF04647">
    <property type="entry name" value="AgrB"/>
    <property type="match status" value="1"/>
</dbReference>
<dbReference type="SMART" id="SM00793">
    <property type="entry name" value="AgrB"/>
    <property type="match status" value="1"/>
</dbReference>
<keyword id="KW-1003">Cell membrane</keyword>
<keyword id="KW-0378">Hydrolase</keyword>
<keyword id="KW-0472">Membrane</keyword>
<keyword id="KW-0645">Protease</keyword>
<keyword id="KW-0673">Quorum sensing</keyword>
<keyword id="KW-0812">Transmembrane</keyword>
<keyword id="KW-1133">Transmembrane helix</keyword>
<evidence type="ECO:0000255" key="1">
    <source>
        <dbReference type="HAMAP-Rule" id="MF_00784"/>
    </source>
</evidence>
<name>AGRB_LISW6</name>
<organism>
    <name type="scientific">Listeria welshimeri serovar 6b (strain ATCC 35897 / DSM 20650 / CCUG 15529 / CIP 8149 / NCTC 11857 / SLCC 5334 / V8)</name>
    <dbReference type="NCBI Taxonomy" id="386043"/>
    <lineage>
        <taxon>Bacteria</taxon>
        <taxon>Bacillati</taxon>
        <taxon>Bacillota</taxon>
        <taxon>Bacilli</taxon>
        <taxon>Bacillales</taxon>
        <taxon>Listeriaceae</taxon>
        <taxon>Listeria</taxon>
    </lineage>
</organism>
<accession>A0AEM5</accession>
<feature type="chain" id="PRO_1000083585" description="Putative AgrB-like protein">
    <location>
        <begin position="1"/>
        <end position="204"/>
    </location>
</feature>
<feature type="transmembrane region" description="Helical" evidence="1">
    <location>
        <begin position="40"/>
        <end position="60"/>
    </location>
</feature>
<feature type="transmembrane region" description="Helical" evidence="1">
    <location>
        <begin position="87"/>
        <end position="107"/>
    </location>
</feature>
<feature type="transmembrane region" description="Helical" evidence="1">
    <location>
        <begin position="111"/>
        <end position="131"/>
    </location>
</feature>
<feature type="transmembrane region" description="Helical" evidence="1">
    <location>
        <begin position="156"/>
        <end position="176"/>
    </location>
</feature>
<sequence>MSNFTVKVPLSERMADVLISKDRWKDDEEGYLKVKYGLEIILINVMKFAIVYGISLATGLLLQTVTVHMSYLWLRRYSFGLHATKTLNCTLISLAMFVLAPFVFQNIPSNNWIVLGTFAFILLNMFLFAPADTESLPLIGEKHRKTLKRKAMIGTLILTGIALLIPFAEMKTLIMVGSLFQVISINPLSYKLLKRRYRNYEKYE</sequence>
<proteinExistence type="inferred from homology"/>